<feature type="chain" id="PRO_1000008403" description="Holo-[acyl-carrier-protein] synthase">
    <location>
        <begin position="1"/>
        <end position="145"/>
    </location>
</feature>
<feature type="binding site" evidence="1">
    <location>
        <position position="9"/>
    </location>
    <ligand>
        <name>Mg(2+)</name>
        <dbReference type="ChEBI" id="CHEBI:18420"/>
    </ligand>
</feature>
<feature type="binding site" evidence="1">
    <location>
        <position position="63"/>
    </location>
    <ligand>
        <name>Mg(2+)</name>
        <dbReference type="ChEBI" id="CHEBI:18420"/>
    </ligand>
</feature>
<protein>
    <recommendedName>
        <fullName evidence="1">Holo-[acyl-carrier-protein] synthase</fullName>
        <shortName evidence="1">Holo-ACP synthase</shortName>
        <ecNumber evidence="1">2.7.8.7</ecNumber>
    </recommendedName>
    <alternativeName>
        <fullName evidence="1">4'-phosphopantetheinyl transferase AcpS</fullName>
    </alternativeName>
</protein>
<keyword id="KW-0963">Cytoplasm</keyword>
<keyword id="KW-0275">Fatty acid biosynthesis</keyword>
<keyword id="KW-0276">Fatty acid metabolism</keyword>
<keyword id="KW-0444">Lipid biosynthesis</keyword>
<keyword id="KW-0443">Lipid metabolism</keyword>
<keyword id="KW-0460">Magnesium</keyword>
<keyword id="KW-0479">Metal-binding</keyword>
<keyword id="KW-0808">Transferase</keyword>
<reference key="1">
    <citation type="submission" date="2007-03" db="EMBL/GenBank/DDBJ databases">
        <title>Complete sequence of chromosome 1 of Burkholderia vietnamiensis G4.</title>
        <authorList>
            <consortium name="US DOE Joint Genome Institute"/>
            <person name="Copeland A."/>
            <person name="Lucas S."/>
            <person name="Lapidus A."/>
            <person name="Barry K."/>
            <person name="Detter J.C."/>
            <person name="Glavina del Rio T."/>
            <person name="Hammon N."/>
            <person name="Israni S."/>
            <person name="Dalin E."/>
            <person name="Tice H."/>
            <person name="Pitluck S."/>
            <person name="Chain P."/>
            <person name="Malfatti S."/>
            <person name="Shin M."/>
            <person name="Vergez L."/>
            <person name="Schmutz J."/>
            <person name="Larimer F."/>
            <person name="Land M."/>
            <person name="Hauser L."/>
            <person name="Kyrpides N."/>
            <person name="Tiedje J."/>
            <person name="Richardson P."/>
        </authorList>
    </citation>
    <scope>NUCLEOTIDE SEQUENCE [LARGE SCALE GENOMIC DNA]</scope>
    <source>
        <strain>G4 / LMG 22486</strain>
    </source>
</reference>
<organism>
    <name type="scientific">Burkholderia vietnamiensis (strain G4 / LMG 22486)</name>
    <name type="common">Burkholderia cepacia (strain R1808)</name>
    <dbReference type="NCBI Taxonomy" id="269482"/>
    <lineage>
        <taxon>Bacteria</taxon>
        <taxon>Pseudomonadati</taxon>
        <taxon>Pseudomonadota</taxon>
        <taxon>Betaproteobacteria</taxon>
        <taxon>Burkholderiales</taxon>
        <taxon>Burkholderiaceae</taxon>
        <taxon>Burkholderia</taxon>
        <taxon>Burkholderia cepacia complex</taxon>
    </lineage>
</organism>
<comment type="function">
    <text evidence="1">Transfers the 4'-phosphopantetheine moiety from coenzyme A to a Ser of acyl-carrier-protein.</text>
</comment>
<comment type="catalytic activity">
    <reaction evidence="1">
        <text>apo-[ACP] + CoA = holo-[ACP] + adenosine 3',5'-bisphosphate + H(+)</text>
        <dbReference type="Rhea" id="RHEA:12068"/>
        <dbReference type="Rhea" id="RHEA-COMP:9685"/>
        <dbReference type="Rhea" id="RHEA-COMP:9690"/>
        <dbReference type="ChEBI" id="CHEBI:15378"/>
        <dbReference type="ChEBI" id="CHEBI:29999"/>
        <dbReference type="ChEBI" id="CHEBI:57287"/>
        <dbReference type="ChEBI" id="CHEBI:58343"/>
        <dbReference type="ChEBI" id="CHEBI:64479"/>
        <dbReference type="EC" id="2.7.8.7"/>
    </reaction>
</comment>
<comment type="cofactor">
    <cofactor evidence="1">
        <name>Mg(2+)</name>
        <dbReference type="ChEBI" id="CHEBI:18420"/>
    </cofactor>
</comment>
<comment type="subcellular location">
    <subcellularLocation>
        <location evidence="1">Cytoplasm</location>
    </subcellularLocation>
</comment>
<comment type="similarity">
    <text evidence="1">Belongs to the P-Pant transferase superfamily. AcpS family.</text>
</comment>
<proteinExistence type="inferred from homology"/>
<accession>A4JCR5</accession>
<dbReference type="EC" id="2.7.8.7" evidence="1"/>
<dbReference type="EMBL" id="CP000614">
    <property type="protein sequence ID" value="ABO54068.1"/>
    <property type="molecule type" value="Genomic_DNA"/>
</dbReference>
<dbReference type="SMR" id="A4JCR5"/>
<dbReference type="KEGG" id="bvi:Bcep1808_1057"/>
<dbReference type="eggNOG" id="COG0736">
    <property type="taxonomic scope" value="Bacteria"/>
</dbReference>
<dbReference type="HOGENOM" id="CLU_089696_3_1_4"/>
<dbReference type="Proteomes" id="UP000002287">
    <property type="component" value="Chromosome 1"/>
</dbReference>
<dbReference type="GO" id="GO:0005737">
    <property type="term" value="C:cytoplasm"/>
    <property type="evidence" value="ECO:0007669"/>
    <property type="project" value="UniProtKB-SubCell"/>
</dbReference>
<dbReference type="GO" id="GO:0008897">
    <property type="term" value="F:holo-[acyl-carrier-protein] synthase activity"/>
    <property type="evidence" value="ECO:0007669"/>
    <property type="project" value="UniProtKB-UniRule"/>
</dbReference>
<dbReference type="GO" id="GO:0000287">
    <property type="term" value="F:magnesium ion binding"/>
    <property type="evidence" value="ECO:0007669"/>
    <property type="project" value="UniProtKB-UniRule"/>
</dbReference>
<dbReference type="GO" id="GO:0006633">
    <property type="term" value="P:fatty acid biosynthetic process"/>
    <property type="evidence" value="ECO:0007669"/>
    <property type="project" value="UniProtKB-UniRule"/>
</dbReference>
<dbReference type="Gene3D" id="3.90.470.20">
    <property type="entry name" value="4'-phosphopantetheinyl transferase domain"/>
    <property type="match status" value="1"/>
</dbReference>
<dbReference type="HAMAP" id="MF_00101">
    <property type="entry name" value="AcpS"/>
    <property type="match status" value="1"/>
</dbReference>
<dbReference type="InterPro" id="IPR008278">
    <property type="entry name" value="4-PPantetheinyl_Trfase_dom"/>
</dbReference>
<dbReference type="InterPro" id="IPR037143">
    <property type="entry name" value="4-PPantetheinyl_Trfase_dom_sf"/>
</dbReference>
<dbReference type="InterPro" id="IPR002582">
    <property type="entry name" value="ACPS"/>
</dbReference>
<dbReference type="InterPro" id="IPR004568">
    <property type="entry name" value="Ppantetheine-prot_Trfase_dom"/>
</dbReference>
<dbReference type="NCBIfam" id="TIGR00516">
    <property type="entry name" value="acpS"/>
    <property type="match status" value="1"/>
</dbReference>
<dbReference type="NCBIfam" id="TIGR00556">
    <property type="entry name" value="pantethn_trn"/>
    <property type="match status" value="1"/>
</dbReference>
<dbReference type="Pfam" id="PF01648">
    <property type="entry name" value="ACPS"/>
    <property type="match status" value="1"/>
</dbReference>
<dbReference type="SUPFAM" id="SSF56214">
    <property type="entry name" value="4'-phosphopantetheinyl transferase"/>
    <property type="match status" value="1"/>
</dbReference>
<gene>
    <name evidence="1" type="primary">acpS</name>
    <name type="ordered locus">Bcep1808_1057</name>
</gene>
<sequence>MAIYGIGTDIVQLSRIAAVLERTGGRFAEKVLGPDELRVFHARRARSEARGIAFLATRFSAKEAFSKAIGLGMHWPMTWRALQTLNQRSGEPYVVASGELADWLAARGITARVTVSDERDYAVSFVVAETDAPPPAPAPVPRTLP</sequence>
<evidence type="ECO:0000255" key="1">
    <source>
        <dbReference type="HAMAP-Rule" id="MF_00101"/>
    </source>
</evidence>
<name>ACPS_BURVG</name>